<name>DAPD_BRUAB</name>
<dbReference type="EC" id="2.3.1.117" evidence="1"/>
<dbReference type="EMBL" id="AE017224">
    <property type="protein sequence ID" value="AAX76349.1"/>
    <property type="molecule type" value="Genomic_DNA"/>
</dbReference>
<dbReference type="RefSeq" id="WP_002965622.1">
    <property type="nucleotide sequence ID" value="NC_006933.1"/>
</dbReference>
<dbReference type="SMR" id="Q576T5"/>
<dbReference type="EnsemblBacteria" id="AAX76349">
    <property type="protein sequence ID" value="AAX76349"/>
    <property type="gene ID" value="BruAb2_0968"/>
</dbReference>
<dbReference type="GeneID" id="97534922"/>
<dbReference type="KEGG" id="bmb:BruAb2_0968"/>
<dbReference type="HOGENOM" id="CLU_050859_0_1_5"/>
<dbReference type="UniPathway" id="UPA00034">
    <property type="reaction ID" value="UER00019"/>
</dbReference>
<dbReference type="Proteomes" id="UP000000540">
    <property type="component" value="Chromosome II"/>
</dbReference>
<dbReference type="GO" id="GO:0005737">
    <property type="term" value="C:cytoplasm"/>
    <property type="evidence" value="ECO:0007669"/>
    <property type="project" value="UniProtKB-SubCell"/>
</dbReference>
<dbReference type="GO" id="GO:0008666">
    <property type="term" value="F:2,3,4,5-tetrahydropyridine-2,6-dicarboxylate N-succinyltransferase activity"/>
    <property type="evidence" value="ECO:0007669"/>
    <property type="project" value="UniProtKB-UniRule"/>
</dbReference>
<dbReference type="GO" id="GO:0019877">
    <property type="term" value="P:diaminopimelate biosynthetic process"/>
    <property type="evidence" value="ECO:0007669"/>
    <property type="project" value="UniProtKB-UniRule"/>
</dbReference>
<dbReference type="GO" id="GO:0009089">
    <property type="term" value="P:lysine biosynthetic process via diaminopimelate"/>
    <property type="evidence" value="ECO:0007669"/>
    <property type="project" value="UniProtKB-UniRule"/>
</dbReference>
<dbReference type="CDD" id="cd03350">
    <property type="entry name" value="LbH_THP_succinylT"/>
    <property type="match status" value="1"/>
</dbReference>
<dbReference type="Gene3D" id="2.160.10.10">
    <property type="entry name" value="Hexapeptide repeat proteins"/>
    <property type="match status" value="1"/>
</dbReference>
<dbReference type="Gene3D" id="1.10.166.10">
    <property type="entry name" value="Tetrahydrodipicolinate-N-succinyltransferase, N-terminal domain"/>
    <property type="match status" value="1"/>
</dbReference>
<dbReference type="HAMAP" id="MF_00811">
    <property type="entry name" value="DapD"/>
    <property type="match status" value="1"/>
</dbReference>
<dbReference type="InterPro" id="IPR005664">
    <property type="entry name" value="DapD_Trfase_Hexpep_rpt_fam"/>
</dbReference>
<dbReference type="InterPro" id="IPR001451">
    <property type="entry name" value="Hexapep"/>
</dbReference>
<dbReference type="InterPro" id="IPR018357">
    <property type="entry name" value="Hexapep_transf_CS"/>
</dbReference>
<dbReference type="InterPro" id="IPR023180">
    <property type="entry name" value="THP_succinylTrfase_dom1"/>
</dbReference>
<dbReference type="InterPro" id="IPR037133">
    <property type="entry name" value="THP_succinylTrfase_N_sf"/>
</dbReference>
<dbReference type="InterPro" id="IPR050179">
    <property type="entry name" value="Trans_hexapeptide_repeat"/>
</dbReference>
<dbReference type="InterPro" id="IPR011004">
    <property type="entry name" value="Trimer_LpxA-like_sf"/>
</dbReference>
<dbReference type="NCBIfam" id="TIGR00965">
    <property type="entry name" value="dapD"/>
    <property type="match status" value="1"/>
</dbReference>
<dbReference type="NCBIfam" id="NF008808">
    <property type="entry name" value="PRK11830.1"/>
    <property type="match status" value="1"/>
</dbReference>
<dbReference type="PANTHER" id="PTHR43300:SF10">
    <property type="entry name" value="2,3,4,5-TETRAHYDROPYRIDINE-2,6-DICARBOXYLATE N-ACETYLTRANSFERASE"/>
    <property type="match status" value="1"/>
</dbReference>
<dbReference type="PANTHER" id="PTHR43300">
    <property type="entry name" value="ACETYLTRANSFERASE"/>
    <property type="match status" value="1"/>
</dbReference>
<dbReference type="Pfam" id="PF14602">
    <property type="entry name" value="Hexapep_2"/>
    <property type="match status" value="1"/>
</dbReference>
<dbReference type="Pfam" id="PF14805">
    <property type="entry name" value="THDPS_N_2"/>
    <property type="match status" value="1"/>
</dbReference>
<dbReference type="SUPFAM" id="SSF51161">
    <property type="entry name" value="Trimeric LpxA-like enzymes"/>
    <property type="match status" value="1"/>
</dbReference>
<dbReference type="PROSITE" id="PS00101">
    <property type="entry name" value="HEXAPEP_TRANSFERASES"/>
    <property type="match status" value="1"/>
</dbReference>
<protein>
    <recommendedName>
        <fullName evidence="1">2,3,4,5-tetrahydropyridine-2,6-dicarboxylate N-succinyltransferase</fullName>
        <ecNumber evidence="1">2.3.1.117</ecNumber>
    </recommendedName>
    <alternativeName>
        <fullName evidence="1">Tetrahydrodipicolinate N-succinyltransferase</fullName>
        <shortName evidence="1">THDP succinyltransferase</shortName>
        <shortName evidence="1">THP succinyltransferase</shortName>
        <shortName evidence="1">Tetrahydropicolinate succinylase</shortName>
    </alternativeName>
</protein>
<gene>
    <name evidence="1" type="primary">dapD</name>
    <name type="ordered locus">BruAb2_0968</name>
</gene>
<evidence type="ECO:0000255" key="1">
    <source>
        <dbReference type="HAMAP-Rule" id="MF_00811"/>
    </source>
</evidence>
<keyword id="KW-0012">Acyltransferase</keyword>
<keyword id="KW-0028">Amino-acid biosynthesis</keyword>
<keyword id="KW-0963">Cytoplasm</keyword>
<keyword id="KW-0220">Diaminopimelate biosynthesis</keyword>
<keyword id="KW-0457">Lysine biosynthesis</keyword>
<keyword id="KW-0677">Repeat</keyword>
<keyword id="KW-0808">Transferase</keyword>
<proteinExistence type="inferred from homology"/>
<feature type="chain" id="PRO_0000196920" description="2,3,4,5-tetrahydropyridine-2,6-dicarboxylate N-succinyltransferase">
    <location>
        <begin position="1"/>
        <end position="284"/>
    </location>
</feature>
<feature type="binding site" evidence="1">
    <location>
        <position position="111"/>
    </location>
    <ligand>
        <name>substrate</name>
    </ligand>
</feature>
<feature type="binding site" evidence="1">
    <location>
        <position position="148"/>
    </location>
    <ligand>
        <name>substrate</name>
    </ligand>
</feature>
<sequence length="284" mass="30753">MTKPDLASLEKTIEKAFDERDGINTATRGEVREAVEQSLILLDRGEVRVAEKQADGNWHVNQWLKKAVLLSFRLNPMEVIKGGPGQSSWWDKVPSKFDGWTANEFEKAGFRAVPNCIVRHSAYIAPNAILMPSFVNLGAYVDKGAMIDTWATVGSCAQIGKNVHLSGGVGIGGVLEPMQAGPTIIEDNCFIGARSEVVEGCIVREGSVLGMGVFIGKSTKIVDRATGEVFYGEVPPYSVVVAGTMPGKNVPGENWGPSLYCAVIVKRADEKTRSKTSINELLRD</sequence>
<accession>Q576T5</accession>
<organism>
    <name type="scientific">Brucella abortus biovar 1 (strain 9-941)</name>
    <dbReference type="NCBI Taxonomy" id="262698"/>
    <lineage>
        <taxon>Bacteria</taxon>
        <taxon>Pseudomonadati</taxon>
        <taxon>Pseudomonadota</taxon>
        <taxon>Alphaproteobacteria</taxon>
        <taxon>Hyphomicrobiales</taxon>
        <taxon>Brucellaceae</taxon>
        <taxon>Brucella/Ochrobactrum group</taxon>
        <taxon>Brucella</taxon>
    </lineage>
</organism>
<comment type="catalytic activity">
    <reaction evidence="1">
        <text>(S)-2,3,4,5-tetrahydrodipicolinate + succinyl-CoA + H2O = (S)-2-succinylamino-6-oxoheptanedioate + CoA</text>
        <dbReference type="Rhea" id="RHEA:17325"/>
        <dbReference type="ChEBI" id="CHEBI:15377"/>
        <dbReference type="ChEBI" id="CHEBI:15685"/>
        <dbReference type="ChEBI" id="CHEBI:16845"/>
        <dbReference type="ChEBI" id="CHEBI:57287"/>
        <dbReference type="ChEBI" id="CHEBI:57292"/>
        <dbReference type="EC" id="2.3.1.117"/>
    </reaction>
</comment>
<comment type="pathway">
    <text evidence="1">Amino-acid biosynthesis; L-lysine biosynthesis via DAP pathway; LL-2,6-diaminopimelate from (S)-tetrahydrodipicolinate (succinylase route): step 1/3.</text>
</comment>
<comment type="subunit">
    <text evidence="1">Homotrimer.</text>
</comment>
<comment type="subcellular location">
    <subcellularLocation>
        <location evidence="1">Cytoplasm</location>
    </subcellularLocation>
</comment>
<comment type="similarity">
    <text evidence="1">Belongs to the transferase hexapeptide repeat family.</text>
</comment>
<reference key="1">
    <citation type="journal article" date="2005" name="J. Bacteriol.">
        <title>Completion of the genome sequence of Brucella abortus and comparison to the highly similar genomes of Brucella melitensis and Brucella suis.</title>
        <authorList>
            <person name="Halling S.M."/>
            <person name="Peterson-Burch B.D."/>
            <person name="Bricker B.J."/>
            <person name="Zuerner R.L."/>
            <person name="Qing Z."/>
            <person name="Li L.-L."/>
            <person name="Kapur V."/>
            <person name="Alt D.P."/>
            <person name="Olsen S.C."/>
        </authorList>
    </citation>
    <scope>NUCLEOTIDE SEQUENCE [LARGE SCALE GENOMIC DNA]</scope>
    <source>
        <strain>9-941</strain>
    </source>
</reference>